<sequence>MTKGILGKKVGMTQIFTEAGELIPVTVIEATPNVVLQVKTVETDGYNAIQVGFDDKREVLSNKPAKGHVAKANTAPKRFIREFKNVEGLEVGAEITVETFAAGDVVDVTGTSKGKGFQGVIKRHGQSRGPMAHGSRYHRRPGSMGPVAPNRVFKGKNLAGRMGGDRVTIQNLEVVQVVPEKNVILIKGNVPGAKKSLITIKSAVKAGK</sequence>
<dbReference type="EMBL" id="CP000936">
    <property type="protein sequence ID" value="ACA36492.1"/>
    <property type="molecule type" value="Genomic_DNA"/>
</dbReference>
<dbReference type="RefSeq" id="WP_000160197.1">
    <property type="nucleotide sequence ID" value="NC_010380.1"/>
</dbReference>
<dbReference type="SMR" id="B1I8J8"/>
<dbReference type="GeneID" id="93738957"/>
<dbReference type="KEGG" id="spv:SPH_0323"/>
<dbReference type="HOGENOM" id="CLU_044142_4_1_9"/>
<dbReference type="Proteomes" id="UP000002163">
    <property type="component" value="Chromosome"/>
</dbReference>
<dbReference type="GO" id="GO:0022625">
    <property type="term" value="C:cytosolic large ribosomal subunit"/>
    <property type="evidence" value="ECO:0007669"/>
    <property type="project" value="TreeGrafter"/>
</dbReference>
<dbReference type="GO" id="GO:0019843">
    <property type="term" value="F:rRNA binding"/>
    <property type="evidence" value="ECO:0007669"/>
    <property type="project" value="UniProtKB-UniRule"/>
</dbReference>
<dbReference type="GO" id="GO:0003735">
    <property type="term" value="F:structural constituent of ribosome"/>
    <property type="evidence" value="ECO:0007669"/>
    <property type="project" value="InterPro"/>
</dbReference>
<dbReference type="GO" id="GO:0006412">
    <property type="term" value="P:translation"/>
    <property type="evidence" value="ECO:0007669"/>
    <property type="project" value="UniProtKB-UniRule"/>
</dbReference>
<dbReference type="FunFam" id="2.40.30.10:FF:000004">
    <property type="entry name" value="50S ribosomal protein L3"/>
    <property type="match status" value="1"/>
</dbReference>
<dbReference type="FunFam" id="3.30.160.810:FF:000002">
    <property type="entry name" value="50S ribosomal protein L3"/>
    <property type="match status" value="1"/>
</dbReference>
<dbReference type="Gene3D" id="3.30.160.810">
    <property type="match status" value="1"/>
</dbReference>
<dbReference type="Gene3D" id="2.40.30.10">
    <property type="entry name" value="Translation factors"/>
    <property type="match status" value="1"/>
</dbReference>
<dbReference type="HAMAP" id="MF_01325_B">
    <property type="entry name" value="Ribosomal_uL3_B"/>
    <property type="match status" value="1"/>
</dbReference>
<dbReference type="InterPro" id="IPR000597">
    <property type="entry name" value="Ribosomal_uL3"/>
</dbReference>
<dbReference type="InterPro" id="IPR019927">
    <property type="entry name" value="Ribosomal_uL3_bac/org-type"/>
</dbReference>
<dbReference type="InterPro" id="IPR019926">
    <property type="entry name" value="Ribosomal_uL3_CS"/>
</dbReference>
<dbReference type="InterPro" id="IPR009000">
    <property type="entry name" value="Transl_B-barrel_sf"/>
</dbReference>
<dbReference type="NCBIfam" id="TIGR03625">
    <property type="entry name" value="L3_bact"/>
    <property type="match status" value="1"/>
</dbReference>
<dbReference type="PANTHER" id="PTHR11229">
    <property type="entry name" value="50S RIBOSOMAL PROTEIN L3"/>
    <property type="match status" value="1"/>
</dbReference>
<dbReference type="PANTHER" id="PTHR11229:SF16">
    <property type="entry name" value="LARGE RIBOSOMAL SUBUNIT PROTEIN UL3C"/>
    <property type="match status" value="1"/>
</dbReference>
<dbReference type="Pfam" id="PF00297">
    <property type="entry name" value="Ribosomal_L3"/>
    <property type="match status" value="1"/>
</dbReference>
<dbReference type="SUPFAM" id="SSF50447">
    <property type="entry name" value="Translation proteins"/>
    <property type="match status" value="1"/>
</dbReference>
<dbReference type="PROSITE" id="PS00474">
    <property type="entry name" value="RIBOSOMAL_L3"/>
    <property type="match status" value="1"/>
</dbReference>
<reference key="1">
    <citation type="journal article" date="2010" name="Genome Biol.">
        <title>Structure and dynamics of the pan-genome of Streptococcus pneumoniae and closely related species.</title>
        <authorList>
            <person name="Donati C."/>
            <person name="Hiller N.L."/>
            <person name="Tettelin H."/>
            <person name="Muzzi A."/>
            <person name="Croucher N.J."/>
            <person name="Angiuoli S.V."/>
            <person name="Oggioni M."/>
            <person name="Dunning Hotopp J.C."/>
            <person name="Hu F.Z."/>
            <person name="Riley D.R."/>
            <person name="Covacci A."/>
            <person name="Mitchell T.J."/>
            <person name="Bentley S.D."/>
            <person name="Kilian M."/>
            <person name="Ehrlich G.D."/>
            <person name="Rappuoli R."/>
            <person name="Moxon E.R."/>
            <person name="Masignani V."/>
        </authorList>
    </citation>
    <scope>NUCLEOTIDE SEQUENCE [LARGE SCALE GENOMIC DNA]</scope>
    <source>
        <strain>Hungary19A-6</strain>
    </source>
</reference>
<accession>B1I8J8</accession>
<gene>
    <name evidence="1" type="primary">rplC</name>
    <name type="ordered locus">SPH_0323</name>
</gene>
<feature type="chain" id="PRO_1000141928" description="Large ribosomal subunit protein uL3">
    <location>
        <begin position="1"/>
        <end position="208"/>
    </location>
</feature>
<feature type="region of interest" description="Disordered" evidence="2">
    <location>
        <begin position="116"/>
        <end position="148"/>
    </location>
</feature>
<evidence type="ECO:0000255" key="1">
    <source>
        <dbReference type="HAMAP-Rule" id="MF_01325"/>
    </source>
</evidence>
<evidence type="ECO:0000256" key="2">
    <source>
        <dbReference type="SAM" id="MobiDB-lite"/>
    </source>
</evidence>
<evidence type="ECO:0000305" key="3"/>
<comment type="function">
    <text evidence="1">One of the primary rRNA binding proteins, it binds directly near the 3'-end of the 23S rRNA, where it nucleates assembly of the 50S subunit.</text>
</comment>
<comment type="subunit">
    <text evidence="1">Part of the 50S ribosomal subunit. Forms a cluster with proteins L14 and L19.</text>
</comment>
<comment type="similarity">
    <text evidence="1">Belongs to the universal ribosomal protein uL3 family.</text>
</comment>
<name>RL3_STRPI</name>
<proteinExistence type="inferred from homology"/>
<keyword id="KW-0687">Ribonucleoprotein</keyword>
<keyword id="KW-0689">Ribosomal protein</keyword>
<keyword id="KW-0694">RNA-binding</keyword>
<keyword id="KW-0699">rRNA-binding</keyword>
<protein>
    <recommendedName>
        <fullName evidence="1">Large ribosomal subunit protein uL3</fullName>
    </recommendedName>
    <alternativeName>
        <fullName evidence="3">50S ribosomal protein L3</fullName>
    </alternativeName>
</protein>
<organism>
    <name type="scientific">Streptococcus pneumoniae (strain Hungary19A-6)</name>
    <dbReference type="NCBI Taxonomy" id="487214"/>
    <lineage>
        <taxon>Bacteria</taxon>
        <taxon>Bacillati</taxon>
        <taxon>Bacillota</taxon>
        <taxon>Bacilli</taxon>
        <taxon>Lactobacillales</taxon>
        <taxon>Streptococcaceae</taxon>
        <taxon>Streptococcus</taxon>
    </lineage>
</organism>